<protein>
    <recommendedName>
        <fullName evidence="1">Crossover junction endodeoxyribonuclease RuvC</fullName>
        <ecNumber evidence="1">3.1.21.10</ecNumber>
    </recommendedName>
    <alternativeName>
        <fullName evidence="1">Holliday junction nuclease RuvC</fullName>
    </alternativeName>
    <alternativeName>
        <fullName evidence="1">Holliday junction resolvase RuvC</fullName>
    </alternativeName>
</protein>
<keyword id="KW-0963">Cytoplasm</keyword>
<keyword id="KW-0227">DNA damage</keyword>
<keyword id="KW-0233">DNA recombination</keyword>
<keyword id="KW-0234">DNA repair</keyword>
<keyword id="KW-0238">DNA-binding</keyword>
<keyword id="KW-0255">Endonuclease</keyword>
<keyword id="KW-0378">Hydrolase</keyword>
<keyword id="KW-0460">Magnesium</keyword>
<keyword id="KW-0479">Metal-binding</keyword>
<keyword id="KW-0540">Nuclease</keyword>
<evidence type="ECO:0000255" key="1">
    <source>
        <dbReference type="HAMAP-Rule" id="MF_00034"/>
    </source>
</evidence>
<reference key="1">
    <citation type="journal article" date="2009" name="PLoS ONE">
        <title>Genome sequence of the pathogenic intestinal spirochete Brachyspira hyodysenteriae reveals adaptations to its lifestyle in the porcine large intestine.</title>
        <authorList>
            <person name="Bellgard M.I."/>
            <person name="Wanchanthuek P."/>
            <person name="La T."/>
            <person name="Ryan K."/>
            <person name="Moolhuijzen P."/>
            <person name="Albertyn Z."/>
            <person name="Shaban B."/>
            <person name="Motro Y."/>
            <person name="Dunn D.S."/>
            <person name="Schibeci D."/>
            <person name="Hunter A."/>
            <person name="Barrero R."/>
            <person name="Phillips N.D."/>
            <person name="Hampson D.J."/>
        </authorList>
    </citation>
    <scope>NUCLEOTIDE SEQUENCE [LARGE SCALE GENOMIC DNA]</scope>
    <source>
        <strain>ATCC 49526 / WA1</strain>
    </source>
</reference>
<accession>C0R1L6</accession>
<sequence length="160" mass="17906">MITLGIDPGFARCGYAFIEAKNSAYKIVDSGLIETFQNQEYNQRLSFIYTQLDELIKKYKPNNAAIEELFFSKNTKTAIKVAEARGVIILALTLNNIEFQEYKPKEVKSQITGNGNANKDAMMKMVNLFTGSNIIQDDTADAVAIALAHASRNRIFNDIK</sequence>
<name>RUVC_BRAHW</name>
<comment type="function">
    <text evidence="1">The RuvA-RuvB-RuvC complex processes Holliday junction (HJ) DNA during genetic recombination and DNA repair. Endonuclease that resolves HJ intermediates. Cleaves cruciform DNA by making single-stranded nicks across the HJ at symmetrical positions within the homologous arms, yielding a 5'-phosphate and a 3'-hydroxyl group; requires a central core of homology in the junction. The consensus cleavage sequence is 5'-(A/T)TT(C/G)-3'. Cleavage occurs on the 3'-side of the TT dinucleotide at the point of strand exchange. HJ branch migration catalyzed by RuvA-RuvB allows RuvC to scan DNA until it finds its consensus sequence, where it cleaves and resolves the cruciform DNA.</text>
</comment>
<comment type="catalytic activity">
    <reaction evidence="1">
        <text>Endonucleolytic cleavage at a junction such as a reciprocal single-stranded crossover between two homologous DNA duplexes (Holliday junction).</text>
        <dbReference type="EC" id="3.1.21.10"/>
    </reaction>
</comment>
<comment type="cofactor">
    <cofactor evidence="1">
        <name>Mg(2+)</name>
        <dbReference type="ChEBI" id="CHEBI:18420"/>
    </cofactor>
    <text evidence="1">Binds 2 Mg(2+) ion per subunit.</text>
</comment>
<comment type="subunit">
    <text evidence="1">Homodimer which binds Holliday junction (HJ) DNA. The HJ becomes 2-fold symmetrical on binding to RuvC with unstacked arms; it has a different conformation from HJ DNA in complex with RuvA. In the full resolvosome a probable DNA-RuvA(4)-RuvB(12)-RuvC(2) complex forms which resolves the HJ.</text>
</comment>
<comment type="subcellular location">
    <subcellularLocation>
        <location evidence="1">Cytoplasm</location>
    </subcellularLocation>
</comment>
<comment type="similarity">
    <text evidence="1">Belongs to the RuvC family.</text>
</comment>
<proteinExistence type="inferred from homology"/>
<organism>
    <name type="scientific">Brachyspira hyodysenteriae (strain ATCC 49526 / WA1)</name>
    <dbReference type="NCBI Taxonomy" id="565034"/>
    <lineage>
        <taxon>Bacteria</taxon>
        <taxon>Pseudomonadati</taxon>
        <taxon>Spirochaetota</taxon>
        <taxon>Spirochaetia</taxon>
        <taxon>Brachyspirales</taxon>
        <taxon>Brachyspiraceae</taxon>
        <taxon>Brachyspira</taxon>
    </lineage>
</organism>
<dbReference type="EC" id="3.1.21.10" evidence="1"/>
<dbReference type="EMBL" id="CP001357">
    <property type="protein sequence ID" value="ACN84004.1"/>
    <property type="molecule type" value="Genomic_DNA"/>
</dbReference>
<dbReference type="RefSeq" id="WP_012671046.1">
    <property type="nucleotide sequence ID" value="NC_012225.1"/>
</dbReference>
<dbReference type="SMR" id="C0R1L6"/>
<dbReference type="STRING" id="565034.BHWA1_01534"/>
<dbReference type="KEGG" id="bhy:BHWA1_01534"/>
<dbReference type="eggNOG" id="COG0817">
    <property type="taxonomic scope" value="Bacteria"/>
</dbReference>
<dbReference type="HOGENOM" id="CLU_091257_3_1_12"/>
<dbReference type="Proteomes" id="UP000001803">
    <property type="component" value="Chromosome"/>
</dbReference>
<dbReference type="GO" id="GO:0005737">
    <property type="term" value="C:cytoplasm"/>
    <property type="evidence" value="ECO:0007669"/>
    <property type="project" value="UniProtKB-SubCell"/>
</dbReference>
<dbReference type="GO" id="GO:0048476">
    <property type="term" value="C:Holliday junction resolvase complex"/>
    <property type="evidence" value="ECO:0007669"/>
    <property type="project" value="UniProtKB-UniRule"/>
</dbReference>
<dbReference type="GO" id="GO:0008821">
    <property type="term" value="F:crossover junction DNA endonuclease activity"/>
    <property type="evidence" value="ECO:0007669"/>
    <property type="project" value="UniProtKB-UniRule"/>
</dbReference>
<dbReference type="GO" id="GO:0003677">
    <property type="term" value="F:DNA binding"/>
    <property type="evidence" value="ECO:0007669"/>
    <property type="project" value="UniProtKB-KW"/>
</dbReference>
<dbReference type="GO" id="GO:0000287">
    <property type="term" value="F:magnesium ion binding"/>
    <property type="evidence" value="ECO:0007669"/>
    <property type="project" value="UniProtKB-UniRule"/>
</dbReference>
<dbReference type="GO" id="GO:0006310">
    <property type="term" value="P:DNA recombination"/>
    <property type="evidence" value="ECO:0007669"/>
    <property type="project" value="UniProtKB-UniRule"/>
</dbReference>
<dbReference type="GO" id="GO:0006281">
    <property type="term" value="P:DNA repair"/>
    <property type="evidence" value="ECO:0007669"/>
    <property type="project" value="UniProtKB-UniRule"/>
</dbReference>
<dbReference type="CDD" id="cd16962">
    <property type="entry name" value="RuvC"/>
    <property type="match status" value="1"/>
</dbReference>
<dbReference type="FunFam" id="3.30.420.10:FF:000002">
    <property type="entry name" value="Crossover junction endodeoxyribonuclease RuvC"/>
    <property type="match status" value="1"/>
</dbReference>
<dbReference type="Gene3D" id="3.30.420.10">
    <property type="entry name" value="Ribonuclease H-like superfamily/Ribonuclease H"/>
    <property type="match status" value="1"/>
</dbReference>
<dbReference type="HAMAP" id="MF_00034">
    <property type="entry name" value="RuvC"/>
    <property type="match status" value="1"/>
</dbReference>
<dbReference type="InterPro" id="IPR012337">
    <property type="entry name" value="RNaseH-like_sf"/>
</dbReference>
<dbReference type="InterPro" id="IPR036397">
    <property type="entry name" value="RNaseH_sf"/>
</dbReference>
<dbReference type="InterPro" id="IPR002176">
    <property type="entry name" value="X-over_junc_endoDNase_RuvC"/>
</dbReference>
<dbReference type="NCBIfam" id="NF000711">
    <property type="entry name" value="PRK00039.2-1"/>
    <property type="match status" value="1"/>
</dbReference>
<dbReference type="NCBIfam" id="TIGR00228">
    <property type="entry name" value="ruvC"/>
    <property type="match status" value="1"/>
</dbReference>
<dbReference type="PANTHER" id="PTHR30194">
    <property type="entry name" value="CROSSOVER JUNCTION ENDODEOXYRIBONUCLEASE RUVC"/>
    <property type="match status" value="1"/>
</dbReference>
<dbReference type="PANTHER" id="PTHR30194:SF3">
    <property type="entry name" value="CROSSOVER JUNCTION ENDODEOXYRIBONUCLEASE RUVC"/>
    <property type="match status" value="1"/>
</dbReference>
<dbReference type="Pfam" id="PF02075">
    <property type="entry name" value="RuvC"/>
    <property type="match status" value="1"/>
</dbReference>
<dbReference type="PRINTS" id="PR00696">
    <property type="entry name" value="RSOLVASERUVC"/>
</dbReference>
<dbReference type="SUPFAM" id="SSF53098">
    <property type="entry name" value="Ribonuclease H-like"/>
    <property type="match status" value="1"/>
</dbReference>
<gene>
    <name evidence="1" type="primary">ruvC</name>
    <name type="ordered locus">BHWA1_01534</name>
</gene>
<feature type="chain" id="PRO_1000195239" description="Crossover junction endodeoxyribonuclease RuvC">
    <location>
        <begin position="1"/>
        <end position="160"/>
    </location>
</feature>
<feature type="active site" evidence="1">
    <location>
        <position position="7"/>
    </location>
</feature>
<feature type="active site" evidence="1">
    <location>
        <position position="67"/>
    </location>
</feature>
<feature type="active site" evidence="1">
    <location>
        <position position="138"/>
    </location>
</feature>
<feature type="binding site" evidence="1">
    <location>
        <position position="7"/>
    </location>
    <ligand>
        <name>Mg(2+)</name>
        <dbReference type="ChEBI" id="CHEBI:18420"/>
        <label>1</label>
    </ligand>
</feature>
<feature type="binding site" evidence="1">
    <location>
        <position position="67"/>
    </location>
    <ligand>
        <name>Mg(2+)</name>
        <dbReference type="ChEBI" id="CHEBI:18420"/>
        <label>2</label>
    </ligand>
</feature>
<feature type="binding site" evidence="1">
    <location>
        <position position="138"/>
    </location>
    <ligand>
        <name>Mg(2+)</name>
        <dbReference type="ChEBI" id="CHEBI:18420"/>
        <label>1</label>
    </ligand>
</feature>